<name>ATL23_ARATH</name>
<evidence type="ECO:0000250" key="1"/>
<evidence type="ECO:0000255" key="2"/>
<evidence type="ECO:0000255" key="3">
    <source>
        <dbReference type="PROSITE-ProRule" id="PRU00175"/>
    </source>
</evidence>
<evidence type="ECO:0000269" key="4">
    <source>
    </source>
</evidence>
<evidence type="ECO:0000269" key="5">
    <source>
    </source>
</evidence>
<evidence type="ECO:0000305" key="6"/>
<reference key="1">
    <citation type="journal article" date="2005" name="Plant Physiol.">
        <title>Functional analysis of the RING-type ubiquitin ligase family of Arabidopsis.</title>
        <authorList>
            <person name="Stone S.L."/>
            <person name="Hauksdottir H."/>
            <person name="Troy A."/>
            <person name="Herschleb J."/>
            <person name="Kraft E."/>
            <person name="Callis J."/>
        </authorList>
    </citation>
    <scope>NUCLEOTIDE SEQUENCE [GENOMIC DNA]</scope>
    <scope>FUNCTION</scope>
    <scope>CATALYTIC ACTIVITY</scope>
    <source>
        <strain>cv. Columbia</strain>
        <tissue>Leaf</tissue>
    </source>
</reference>
<reference key="2">
    <citation type="journal article" date="1999" name="DNA Res.">
        <title>Structural analysis of Arabidopsis thaliana chromosome 5. IX. Sequence features of the regions of 1,011,550 bp covered by seventeen P1 and TAC clones.</title>
        <authorList>
            <person name="Kaneko T."/>
            <person name="Katoh T."/>
            <person name="Sato S."/>
            <person name="Nakamura Y."/>
            <person name="Asamizu E."/>
            <person name="Kotani H."/>
            <person name="Miyajima N."/>
            <person name="Tabata S."/>
        </authorList>
    </citation>
    <scope>NUCLEOTIDE SEQUENCE [LARGE SCALE GENOMIC DNA]</scope>
    <source>
        <strain>cv. Columbia</strain>
    </source>
</reference>
<reference key="3">
    <citation type="journal article" date="2017" name="Plant J.">
        <title>Araport11: a complete reannotation of the Arabidopsis thaliana reference genome.</title>
        <authorList>
            <person name="Cheng C.Y."/>
            <person name="Krishnakumar V."/>
            <person name="Chan A.P."/>
            <person name="Thibaud-Nissen F."/>
            <person name="Schobel S."/>
            <person name="Town C.D."/>
        </authorList>
    </citation>
    <scope>GENOME REANNOTATION</scope>
    <source>
        <strain>cv. Columbia</strain>
    </source>
</reference>
<reference key="4">
    <citation type="journal article" date="2003" name="Science">
        <title>Empirical analysis of transcriptional activity in the Arabidopsis genome.</title>
        <authorList>
            <person name="Yamada K."/>
            <person name="Lim J."/>
            <person name="Dale J.M."/>
            <person name="Chen H."/>
            <person name="Shinn P."/>
            <person name="Palm C.J."/>
            <person name="Southwick A.M."/>
            <person name="Wu H.C."/>
            <person name="Kim C.J."/>
            <person name="Nguyen M."/>
            <person name="Pham P.K."/>
            <person name="Cheuk R.F."/>
            <person name="Karlin-Newmann G."/>
            <person name="Liu S.X."/>
            <person name="Lam B."/>
            <person name="Sakano H."/>
            <person name="Wu T."/>
            <person name="Yu G."/>
            <person name="Miranda M."/>
            <person name="Quach H.L."/>
            <person name="Tripp M."/>
            <person name="Chang C.H."/>
            <person name="Lee J.M."/>
            <person name="Toriumi M.J."/>
            <person name="Chan M.M."/>
            <person name="Tang C.C."/>
            <person name="Onodera C.S."/>
            <person name="Deng J.M."/>
            <person name="Akiyama K."/>
            <person name="Ansari Y."/>
            <person name="Arakawa T."/>
            <person name="Banh J."/>
            <person name="Banno F."/>
            <person name="Bowser L."/>
            <person name="Brooks S.Y."/>
            <person name="Carninci P."/>
            <person name="Chao Q."/>
            <person name="Choy N."/>
            <person name="Enju A."/>
            <person name="Goldsmith A.D."/>
            <person name="Gurjal M."/>
            <person name="Hansen N.F."/>
            <person name="Hayashizaki Y."/>
            <person name="Johnson-Hopson C."/>
            <person name="Hsuan V.W."/>
            <person name="Iida K."/>
            <person name="Karnes M."/>
            <person name="Khan S."/>
            <person name="Koesema E."/>
            <person name="Ishida J."/>
            <person name="Jiang P.X."/>
            <person name="Jones T."/>
            <person name="Kawai J."/>
            <person name="Kamiya A."/>
            <person name="Meyers C."/>
            <person name="Nakajima M."/>
            <person name="Narusaka M."/>
            <person name="Seki M."/>
            <person name="Sakurai T."/>
            <person name="Satou M."/>
            <person name="Tamse R."/>
            <person name="Vaysberg M."/>
            <person name="Wallender E.K."/>
            <person name="Wong C."/>
            <person name="Yamamura Y."/>
            <person name="Yuan S."/>
            <person name="Shinozaki K."/>
            <person name="Davis R.W."/>
            <person name="Theologis A."/>
            <person name="Ecker J.R."/>
        </authorList>
    </citation>
    <scope>NUCLEOTIDE SEQUENCE [LARGE SCALE MRNA]</scope>
    <source>
        <strain>cv. Columbia</strain>
    </source>
</reference>
<reference key="5">
    <citation type="submission" date="2002-03" db="EMBL/GenBank/DDBJ databases">
        <title>Full-length cDNA from Arabidopsis thaliana.</title>
        <authorList>
            <person name="Brover V.V."/>
            <person name="Troukhan M.E."/>
            <person name="Alexandrov N.A."/>
            <person name="Lu Y.-P."/>
            <person name="Flavell R.B."/>
            <person name="Feldmann K.A."/>
        </authorList>
    </citation>
    <scope>NUCLEOTIDE SEQUENCE [LARGE SCALE MRNA]</scope>
</reference>
<reference key="6">
    <citation type="journal article" date="2002" name="Genome Biol.">
        <title>Evaluation and classification of RING-finger domains encoded by the Arabidopsis genome.</title>
        <authorList>
            <person name="Kosarev P."/>
            <person name="Mayer K.F.X."/>
            <person name="Hardtke C.S."/>
        </authorList>
    </citation>
    <scope>GENE FAMILY ORGANIZATION</scope>
</reference>
<reference key="7">
    <citation type="journal article" date="2005" name="Plant Physiol.">
        <title>Genome analysis and functional characterization of the E2 and RING-type E3 ligase ubiquitination enzymes of Arabidopsis.</title>
        <authorList>
            <person name="Kraft E."/>
            <person name="Stone S.L."/>
            <person name="Ma L."/>
            <person name="Su N."/>
            <person name="Gao Y."/>
            <person name="Lau O.-S."/>
            <person name="Deng X.-W."/>
            <person name="Callis J."/>
        </authorList>
    </citation>
    <scope>FUNCTION</scope>
    <scope>CATALYTIC ACTIVITY</scope>
</reference>
<reference key="8">
    <citation type="journal article" date="2006" name="J. Mol. Evol.">
        <title>The ATL gene family from Arabidopsis thaliana and Oryza sativa comprises a large number of putative ubiquitin ligases of the RING-H2 type.</title>
        <authorList>
            <person name="Serrano M."/>
            <person name="Parra S."/>
            <person name="Alcaraz L.D."/>
            <person name="Guzman P."/>
        </authorList>
    </citation>
    <scope>NOMENCLATURE</scope>
    <scope>GENE FAMILY ORGANIZATION</scope>
</reference>
<accession>Q8L9W3</accession>
<accession>Q4FE34</accession>
<accession>Q9FHW6</accession>
<comment type="function">
    <text evidence="4 5">E3 ubiquitin-protein ligase able to catalyze polyubiquitination with ubiquitin-conjugating enzyme E2 UBC8, UBC10, UBC11, UBC28 and UBC29 in vitro.</text>
</comment>
<comment type="catalytic activity">
    <reaction evidence="4 5">
        <text>S-ubiquitinyl-[E2 ubiquitin-conjugating enzyme]-L-cysteine + [acceptor protein]-L-lysine = [E2 ubiquitin-conjugating enzyme]-L-cysteine + N(6)-ubiquitinyl-[acceptor protein]-L-lysine.</text>
        <dbReference type="EC" id="2.3.2.27"/>
    </reaction>
</comment>
<comment type="pathway">
    <text>Protein modification; protein ubiquitination.</text>
</comment>
<comment type="subcellular location">
    <subcellularLocation>
        <location evidence="6">Membrane</location>
        <topology evidence="6">Single-pass membrane protein</topology>
    </subcellularLocation>
</comment>
<comment type="domain">
    <text evidence="1">The RING-type zinc finger domain mediates binding to an E2 ubiquitin-conjugating enzyme.</text>
</comment>
<comment type="similarity">
    <text evidence="6">Belongs to the RING-type zinc finger family. ATL subfamily.</text>
</comment>
<sequence length="163" mass="17757">MHYTRISPALVPSLSPTAAAESSGGGTMIATVFMALLLPCVGMCIVFLIYLFLLWCSTRRRIERLRFAEPVKPVTGKGLSVLELEKIPKLTGRELAVIARSTECAVCLEDIESGQSTRLVPGCNHGFHQLCADTWLSNHTVCPVCRAELAPNLPQCNENQSPC</sequence>
<protein>
    <recommendedName>
        <fullName>E3 ubiquitin-protein ligase ATL23</fullName>
        <ecNumber evidence="4 5">2.3.2.27</ecNumber>
    </recommendedName>
    <alternativeName>
        <fullName>RING-H2 finger protein ATL23</fullName>
    </alternativeName>
    <alternativeName>
        <fullName evidence="6">RING-type E3 ubiquitin transferase ATL23</fullName>
    </alternativeName>
</protein>
<proteinExistence type="evidence at protein level"/>
<keyword id="KW-0472">Membrane</keyword>
<keyword id="KW-0479">Metal-binding</keyword>
<keyword id="KW-1185">Reference proteome</keyword>
<keyword id="KW-0808">Transferase</keyword>
<keyword id="KW-0812">Transmembrane</keyword>
<keyword id="KW-1133">Transmembrane helix</keyword>
<keyword id="KW-0833">Ubl conjugation pathway</keyword>
<keyword id="KW-0862">Zinc</keyword>
<keyword id="KW-0863">Zinc-finger</keyword>
<gene>
    <name type="primary">ATL23</name>
    <name type="ordered locus">At5g42200</name>
    <name type="ORF">MJC20.31</name>
</gene>
<dbReference type="EC" id="2.3.2.27" evidence="4 5"/>
<dbReference type="EMBL" id="DQ086857">
    <property type="protein sequence ID" value="AAZ14061.1"/>
    <property type="molecule type" value="Genomic_DNA"/>
</dbReference>
<dbReference type="EMBL" id="AB017067">
    <property type="protein sequence ID" value="BAB08453.1"/>
    <property type="molecule type" value="Genomic_DNA"/>
</dbReference>
<dbReference type="EMBL" id="CP002688">
    <property type="protein sequence ID" value="AED94778.1"/>
    <property type="molecule type" value="Genomic_DNA"/>
</dbReference>
<dbReference type="EMBL" id="BT003837">
    <property type="protein sequence ID" value="AAO41888.1"/>
    <property type="molecule type" value="mRNA"/>
</dbReference>
<dbReference type="EMBL" id="BT005191">
    <property type="protein sequence ID" value="AAO50724.1"/>
    <property type="molecule type" value="mRNA"/>
</dbReference>
<dbReference type="EMBL" id="AY088186">
    <property type="protein sequence ID" value="AAM65729.1"/>
    <property type="molecule type" value="mRNA"/>
</dbReference>
<dbReference type="RefSeq" id="NP_199035.1">
    <property type="nucleotide sequence ID" value="NM_123585.4"/>
</dbReference>
<dbReference type="SMR" id="Q8L9W3"/>
<dbReference type="BioGRID" id="19475">
    <property type="interactions" value="1"/>
</dbReference>
<dbReference type="IntAct" id="Q8L9W3">
    <property type="interactions" value="1"/>
</dbReference>
<dbReference type="STRING" id="3702.Q8L9W3"/>
<dbReference type="PaxDb" id="3702-AT5G42200.1"/>
<dbReference type="EnsemblPlants" id="AT5G42200.1">
    <property type="protein sequence ID" value="AT5G42200.1"/>
    <property type="gene ID" value="AT5G42200"/>
</dbReference>
<dbReference type="GeneID" id="834225"/>
<dbReference type="Gramene" id="AT5G42200.1">
    <property type="protein sequence ID" value="AT5G42200.1"/>
    <property type="gene ID" value="AT5G42200"/>
</dbReference>
<dbReference type="KEGG" id="ath:AT5G42200"/>
<dbReference type="Araport" id="AT5G42200"/>
<dbReference type="TAIR" id="AT5G42200">
    <property type="gene designation" value="ATL23"/>
</dbReference>
<dbReference type="eggNOG" id="KOG0800">
    <property type="taxonomic scope" value="Eukaryota"/>
</dbReference>
<dbReference type="HOGENOM" id="CLU_013137_15_5_1"/>
<dbReference type="InParanoid" id="Q8L9W3"/>
<dbReference type="OMA" id="ICLLWYS"/>
<dbReference type="PhylomeDB" id="Q8L9W3"/>
<dbReference type="UniPathway" id="UPA00143"/>
<dbReference type="PRO" id="PR:Q8L9W3"/>
<dbReference type="Proteomes" id="UP000006548">
    <property type="component" value="Chromosome 5"/>
</dbReference>
<dbReference type="ExpressionAtlas" id="Q8L9W3">
    <property type="expression patterns" value="baseline and differential"/>
</dbReference>
<dbReference type="GO" id="GO:0016020">
    <property type="term" value="C:membrane"/>
    <property type="evidence" value="ECO:0007669"/>
    <property type="project" value="UniProtKB-SubCell"/>
</dbReference>
<dbReference type="GO" id="GO:0004842">
    <property type="term" value="F:ubiquitin-protein transferase activity"/>
    <property type="evidence" value="ECO:0000314"/>
    <property type="project" value="UniProtKB"/>
</dbReference>
<dbReference type="GO" id="GO:0008270">
    <property type="term" value="F:zinc ion binding"/>
    <property type="evidence" value="ECO:0007669"/>
    <property type="project" value="UniProtKB-KW"/>
</dbReference>
<dbReference type="GO" id="GO:0071456">
    <property type="term" value="P:cellular response to hypoxia"/>
    <property type="evidence" value="ECO:0007007"/>
    <property type="project" value="TAIR"/>
</dbReference>
<dbReference type="GO" id="GO:0016567">
    <property type="term" value="P:protein ubiquitination"/>
    <property type="evidence" value="ECO:0000314"/>
    <property type="project" value="UniProtKB"/>
</dbReference>
<dbReference type="FunFam" id="3.30.40.10:FF:001056">
    <property type="entry name" value="E3 ubiquitin-protein ligase ATL23"/>
    <property type="match status" value="1"/>
</dbReference>
<dbReference type="Gene3D" id="3.30.40.10">
    <property type="entry name" value="Zinc/RING finger domain, C3HC4 (zinc finger)"/>
    <property type="match status" value="1"/>
</dbReference>
<dbReference type="InterPro" id="IPR001841">
    <property type="entry name" value="Znf_RING"/>
</dbReference>
<dbReference type="InterPro" id="IPR013083">
    <property type="entry name" value="Znf_RING/FYVE/PHD"/>
</dbReference>
<dbReference type="PANTHER" id="PTHR46539">
    <property type="entry name" value="E3 UBIQUITIN-PROTEIN LIGASE ATL42"/>
    <property type="match status" value="1"/>
</dbReference>
<dbReference type="PANTHER" id="PTHR46539:SF2">
    <property type="entry name" value="RING-H2 FINGER PROTEIN ATL43"/>
    <property type="match status" value="1"/>
</dbReference>
<dbReference type="Pfam" id="PF13639">
    <property type="entry name" value="zf-RING_2"/>
    <property type="match status" value="1"/>
</dbReference>
<dbReference type="SMART" id="SM00184">
    <property type="entry name" value="RING"/>
    <property type="match status" value="1"/>
</dbReference>
<dbReference type="SUPFAM" id="SSF57850">
    <property type="entry name" value="RING/U-box"/>
    <property type="match status" value="1"/>
</dbReference>
<dbReference type="PROSITE" id="PS50089">
    <property type="entry name" value="ZF_RING_2"/>
    <property type="match status" value="1"/>
</dbReference>
<organism>
    <name type="scientific">Arabidopsis thaliana</name>
    <name type="common">Mouse-ear cress</name>
    <dbReference type="NCBI Taxonomy" id="3702"/>
    <lineage>
        <taxon>Eukaryota</taxon>
        <taxon>Viridiplantae</taxon>
        <taxon>Streptophyta</taxon>
        <taxon>Embryophyta</taxon>
        <taxon>Tracheophyta</taxon>
        <taxon>Spermatophyta</taxon>
        <taxon>Magnoliopsida</taxon>
        <taxon>eudicotyledons</taxon>
        <taxon>Gunneridae</taxon>
        <taxon>Pentapetalae</taxon>
        <taxon>rosids</taxon>
        <taxon>malvids</taxon>
        <taxon>Brassicales</taxon>
        <taxon>Brassicaceae</taxon>
        <taxon>Camelineae</taxon>
        <taxon>Arabidopsis</taxon>
    </lineage>
</organism>
<feature type="chain" id="PRO_0000055813" description="E3 ubiquitin-protein ligase ATL23">
    <location>
        <begin position="1"/>
        <end position="163"/>
    </location>
</feature>
<feature type="transmembrane region" description="Helical" evidence="2">
    <location>
        <begin position="35"/>
        <end position="55"/>
    </location>
</feature>
<feature type="zinc finger region" description="RING-type; atypical" evidence="3">
    <location>
        <begin position="104"/>
        <end position="146"/>
    </location>
</feature>
<feature type="sequence conflict" description="In Ref. 4; AAM65729." evidence="6" ref="4">
    <original>G</original>
    <variation>D</variation>
    <location>
        <position position="24"/>
    </location>
</feature>
<feature type="sequence conflict" description="In Ref. 4; AAM65729." evidence="6" ref="4">
    <original>T</original>
    <variation>A</variation>
    <location>
        <position position="75"/>
    </location>
</feature>